<keyword id="KW-0238">DNA-binding</keyword>
<keyword id="KW-0539">Nucleus</keyword>
<keyword id="KW-1185">Reference proteome</keyword>
<keyword id="KW-0677">Repeat</keyword>
<keyword id="KW-0346">Stress response</keyword>
<keyword id="KW-0804">Transcription</keyword>
<keyword id="KW-0805">Transcription regulation</keyword>
<comment type="function">
    <text evidence="3 4">Transcription factor involved in cold-regulation of CBF genes and in the development of freezing tolerance. May be part of a complex network of transcription factors controlling the expression of CBF genes and other genes in response to cold stress. Binds to the MYB recognition sequences in the promoters of CBF1, CBF2 and CBF3 genes (PubMed:17015446). Involved in drought and salt tolerance. May enhance expression levels of genes involved in abscisic acid (ABA) biosynthesis and signaling, as well as those encoding stress-protective proteins (PubMed:19161942).</text>
</comment>
<comment type="subunit">
    <text evidence="3">Interacts with SCRM/ICE1.</text>
</comment>
<comment type="interaction">
    <interactant intactId="EBI-21497119">
        <id>Q9LTC4</id>
    </interactant>
    <interactant intactId="EBI-632231">
        <id>O24407</id>
        <label>IAA16</label>
    </interactant>
    <organismsDiffer>false</organismsDiffer>
    <experiments>3</experiments>
</comment>
<comment type="interaction">
    <interactant intactId="EBI-21497119">
        <id>Q9LTC4</id>
    </interactant>
    <interactant intactId="EBI-632243">
        <id>P93830</id>
        <label>IAA17</label>
    </interactant>
    <organismsDiffer>false</organismsDiffer>
    <experiments>3</experiments>
</comment>
<comment type="interaction">
    <interactant intactId="EBI-21497119">
        <id>Q9LTC4</id>
    </interactant>
    <interactant intactId="EBI-632257">
        <id>O24409</id>
        <label>IAA19</label>
    </interactant>
    <organismsDiffer>false</organismsDiffer>
    <experiments>3</experiments>
</comment>
<comment type="interaction">
    <interactant intactId="EBI-21497119">
        <id>Q9LTC4</id>
    </interactant>
    <interactant intactId="EBI-632272">
        <id>O24410</id>
        <label>IAA20</label>
    </interactant>
    <organismsDiffer>false</organismsDiffer>
    <experiments>3</experiments>
</comment>
<comment type="interaction">
    <interactant intactId="EBI-21497119">
        <id>Q9LTC4</id>
    </interactant>
    <interactant intactId="EBI-3947418">
        <id>Q8LAL2</id>
        <label>IAA26</label>
    </interactant>
    <organismsDiffer>false</organismsDiffer>
    <experiments>3</experiments>
</comment>
<comment type="interaction">
    <interactant intactId="EBI-21497119">
        <id>Q9LTC4</id>
    </interactant>
    <interactant intactId="EBI-3946459">
        <id>Q9C5X0</id>
        <label>IAA34</label>
    </interactant>
    <organismsDiffer>false</organismsDiffer>
    <experiments>3</experiments>
</comment>
<comment type="subcellular location">
    <subcellularLocation>
        <location evidence="1 3">Nucleus</location>
    </subcellularLocation>
</comment>
<comment type="tissue specificity">
    <text evidence="3 4">Expressed in roots, leaves, stems and flowers (PubMed:17015446, PubMed:19161942). Expressed in stomatal guard cells (PubMed:19161942).</text>
</comment>
<comment type="induction">
    <text evidence="4">Induced by abscisic acid (ABA) and drought stress (PubMed:19161942). Induced by salt stress (PubMed:19161942).</text>
</comment>
<comment type="miscellaneous">
    <text evidence="4">Plants over-expressing MYB15 have improved drought and salt tolerance.</text>
</comment>
<comment type="sequence caution" evidence="6">
    <conflict type="frameshift">
        <sequence resource="EMBL-CDS" id="CAA74603"/>
    </conflict>
</comment>
<evidence type="ECO:0000255" key="1">
    <source>
        <dbReference type="PROSITE-ProRule" id="PRU00625"/>
    </source>
</evidence>
<evidence type="ECO:0000256" key="2">
    <source>
        <dbReference type="SAM" id="MobiDB-lite"/>
    </source>
</evidence>
<evidence type="ECO:0000269" key="3">
    <source>
    </source>
</evidence>
<evidence type="ECO:0000269" key="4">
    <source>
    </source>
</evidence>
<evidence type="ECO:0000303" key="5">
    <source>
    </source>
</evidence>
<evidence type="ECO:0000305" key="6"/>
<evidence type="ECO:0000312" key="7">
    <source>
        <dbReference type="Araport" id="AT3G23250"/>
    </source>
</evidence>
<evidence type="ECO:0000312" key="8">
    <source>
        <dbReference type="EMBL" id="CAA74603.1"/>
    </source>
</evidence>
<reference key="1">
    <citation type="submission" date="1997-05" db="EMBL/GenBank/DDBJ databases">
        <title>One hundred R2R3-MYB genes in the genome of Arabidopsis thaliana.</title>
        <authorList>
            <person name="Romero I."/>
            <person name="Fuertes A."/>
            <person name="Benito M.J."/>
            <person name="Malpica J."/>
            <person name="Leyva A."/>
            <person name="Paz-Ares J."/>
        </authorList>
    </citation>
    <scope>NUCLEOTIDE SEQUENCE [MRNA]</scope>
</reference>
<reference key="2">
    <citation type="submission" date="2004-02" db="EMBL/GenBank/DDBJ databases">
        <title>The MYB transcription factor family in Arabidopsis: a genome-wide cloning and expression pattern analysis.</title>
        <authorList>
            <person name="Qu L."/>
            <person name="Gu H."/>
        </authorList>
    </citation>
    <scope>NUCLEOTIDE SEQUENCE [MRNA]</scope>
</reference>
<reference key="3">
    <citation type="journal article" date="2000" name="DNA Res.">
        <title>Structural analysis of Arabidopsis thaliana chromosome 3. I. Sequence features of the regions of 4,504,864 bp covered by sixty P1 and TAC clones.</title>
        <authorList>
            <person name="Sato S."/>
            <person name="Nakamura Y."/>
            <person name="Kaneko T."/>
            <person name="Katoh T."/>
            <person name="Asamizu E."/>
            <person name="Tabata S."/>
        </authorList>
    </citation>
    <scope>NUCLEOTIDE SEQUENCE [LARGE SCALE GENOMIC DNA]</scope>
    <source>
        <strain>cv. Columbia</strain>
    </source>
</reference>
<reference key="4">
    <citation type="journal article" date="2017" name="Plant J.">
        <title>Araport11: a complete reannotation of the Arabidopsis thaliana reference genome.</title>
        <authorList>
            <person name="Cheng C.Y."/>
            <person name="Krishnakumar V."/>
            <person name="Chan A.P."/>
            <person name="Thibaud-Nissen F."/>
            <person name="Schobel S."/>
            <person name="Town C.D."/>
        </authorList>
    </citation>
    <scope>GENOME REANNOTATION</scope>
    <source>
        <strain>cv. Columbia</strain>
    </source>
</reference>
<reference key="5">
    <citation type="submission" date="2004-09" db="EMBL/GenBank/DDBJ databases">
        <title>Large-scale analysis of RIKEN Arabidopsis full-length (RAFL) cDNAs.</title>
        <authorList>
            <person name="Totoki Y."/>
            <person name="Seki M."/>
            <person name="Ishida J."/>
            <person name="Nakajima M."/>
            <person name="Enju A."/>
            <person name="Kamiya A."/>
            <person name="Narusaka M."/>
            <person name="Shin-i T."/>
            <person name="Nakagawa M."/>
            <person name="Sakamoto N."/>
            <person name="Oishi K."/>
            <person name="Kohara Y."/>
            <person name="Kobayashi M."/>
            <person name="Toyoda A."/>
            <person name="Sakaki Y."/>
            <person name="Sakurai T."/>
            <person name="Iida K."/>
            <person name="Akiyama K."/>
            <person name="Satou M."/>
            <person name="Toyoda T."/>
            <person name="Konagaya A."/>
            <person name="Carninci P."/>
            <person name="Kawai J."/>
            <person name="Hayashizaki Y."/>
            <person name="Shinozaki K."/>
        </authorList>
    </citation>
    <scope>NUCLEOTIDE SEQUENCE [LARGE SCALE MRNA]</scope>
    <source>
        <strain>cv. Columbia</strain>
    </source>
</reference>
<reference key="6">
    <citation type="submission" date="2006-07" db="EMBL/GenBank/DDBJ databases">
        <title>Arabidopsis ORF clones.</title>
        <authorList>
            <person name="Quinitio C."/>
            <person name="Chen H."/>
            <person name="Kim C.J."/>
            <person name="Shinn P."/>
            <person name="Ecker J.R."/>
        </authorList>
    </citation>
    <scope>NUCLEOTIDE SEQUENCE [LARGE SCALE MRNA]</scope>
    <source>
        <strain>cv. Columbia</strain>
    </source>
</reference>
<reference key="7">
    <citation type="journal article" date="1996" name="Plant Mol. Biol.">
        <title>Identification of a light-regulated MYB gene from an Arabidopsis transcription factor gene collection.</title>
        <authorList>
            <person name="Quaedvlieg N."/>
            <person name="Dockx J."/>
            <person name="Keultjes G."/>
            <person name="Kock P."/>
            <person name="Wilmering J."/>
            <person name="Weisbeek P."/>
            <person name="Smeekens S."/>
        </authorList>
    </citation>
    <scope>NUCLEOTIDE SEQUENCE [GENOMIC DNA] OF 1-122</scope>
    <source>
        <strain>cv. Landsberg erecta</strain>
    </source>
</reference>
<reference key="8">
    <citation type="journal article" date="2006" name="J. Biol. Chem.">
        <title>A R2R3 type MYB transcription factor is involved in the cold regulation of CBF genes and in acquired freezing tolerance.</title>
        <authorList>
            <person name="Agarwal M."/>
            <person name="Hao Y."/>
            <person name="Kapoor A."/>
            <person name="Dong C.H."/>
            <person name="Fujii H."/>
            <person name="Zheng X."/>
            <person name="Zhu J.K."/>
        </authorList>
    </citation>
    <scope>FUNCTION</scope>
    <scope>INTERACTION WITH SCRM/ICE1</scope>
    <scope>SUBCELLULAR LOCATION</scope>
    <scope>TISSUE SPECIFICITY</scope>
    <scope>INDUCTION BY SALT STRESS</scope>
</reference>
<reference key="9">
    <citation type="journal article" date="2009" name="J. Genet. Genomics">
        <title>Transgenic expression of MYB15 confers enhanced sensitivity to abscisic acid and improved drought tolerance in Arabidopsis thaliana.</title>
        <authorList>
            <person name="Ding Z."/>
            <person name="Li S."/>
            <person name="An X."/>
            <person name="Liu X."/>
            <person name="Qin H."/>
            <person name="Wang D."/>
        </authorList>
    </citation>
    <scope>FUNCTION</scope>
    <scope>TISSUE SPECIFICITY</scope>
    <scope>INDUCTION</scope>
</reference>
<protein>
    <recommendedName>
        <fullName evidence="6">Transcription factor MYB15</fullName>
    </recommendedName>
    <alternativeName>
        <fullName evidence="6">Myb-related protein 15</fullName>
        <shortName evidence="8">AtMYB15</shortName>
    </alternativeName>
    <alternativeName>
        <fullName evidence="6">Myb-related protein Y19</fullName>
        <shortName evidence="5">AtY19</shortName>
    </alternativeName>
</protein>
<proteinExistence type="evidence at protein level"/>
<dbReference type="EMBL" id="Y14207">
    <property type="protein sequence ID" value="CAA74603.1"/>
    <property type="status" value="ALT_FRAME"/>
    <property type="molecule type" value="mRNA"/>
</dbReference>
<dbReference type="EMBL" id="AY550296">
    <property type="protein sequence ID" value="AAS58507.1"/>
    <property type="molecule type" value="mRNA"/>
</dbReference>
<dbReference type="EMBL" id="AB025608">
    <property type="protein sequence ID" value="BAA95738.1"/>
    <property type="molecule type" value="Genomic_DNA"/>
</dbReference>
<dbReference type="EMBL" id="CP002686">
    <property type="protein sequence ID" value="AEE76740.1"/>
    <property type="molecule type" value="Genomic_DNA"/>
</dbReference>
<dbReference type="EMBL" id="AK176617">
    <property type="protein sequence ID" value="BAD44380.1"/>
    <property type="molecule type" value="mRNA"/>
</dbReference>
<dbReference type="EMBL" id="AK176693">
    <property type="protein sequence ID" value="BAD44456.1"/>
    <property type="molecule type" value="mRNA"/>
</dbReference>
<dbReference type="EMBL" id="BT026046">
    <property type="protein sequence ID" value="ABG48402.1"/>
    <property type="molecule type" value="mRNA"/>
</dbReference>
<dbReference type="EMBL" id="X90384">
    <property type="protein sequence ID" value="CAA62032.1"/>
    <property type="molecule type" value="Genomic_DNA"/>
</dbReference>
<dbReference type="PIR" id="S58294">
    <property type="entry name" value="S58294"/>
</dbReference>
<dbReference type="RefSeq" id="NP_188966.1">
    <property type="nucleotide sequence ID" value="NM_113226.5"/>
</dbReference>
<dbReference type="SMR" id="Q9LTC4"/>
<dbReference type="FunCoup" id="Q9LTC4">
    <property type="interactions" value="1"/>
</dbReference>
<dbReference type="IntAct" id="Q9LTC4">
    <property type="interactions" value="8"/>
</dbReference>
<dbReference type="STRING" id="3702.Q9LTC4"/>
<dbReference type="iPTMnet" id="Q9LTC4"/>
<dbReference type="PaxDb" id="3702-AT3G23250.1"/>
<dbReference type="ProteomicsDB" id="248918"/>
<dbReference type="EnsemblPlants" id="AT3G23250.1">
    <property type="protein sequence ID" value="AT3G23250.1"/>
    <property type="gene ID" value="AT3G23250"/>
</dbReference>
<dbReference type="GeneID" id="821904"/>
<dbReference type="Gramene" id="AT3G23250.1">
    <property type="protein sequence ID" value="AT3G23250.1"/>
    <property type="gene ID" value="AT3G23250"/>
</dbReference>
<dbReference type="KEGG" id="ath:AT3G23250"/>
<dbReference type="Araport" id="AT3G23250"/>
<dbReference type="TAIR" id="AT3G23250">
    <property type="gene designation" value="MYB15"/>
</dbReference>
<dbReference type="eggNOG" id="KOG0048">
    <property type="taxonomic scope" value="Eukaryota"/>
</dbReference>
<dbReference type="HOGENOM" id="CLU_028567_6_4_1"/>
<dbReference type="InParanoid" id="Q9LTC4"/>
<dbReference type="OMA" id="DDMQFWF"/>
<dbReference type="OrthoDB" id="2143914at2759"/>
<dbReference type="PhylomeDB" id="Q9LTC4"/>
<dbReference type="PRO" id="PR:Q9LTC4"/>
<dbReference type="Proteomes" id="UP000006548">
    <property type="component" value="Chromosome 3"/>
</dbReference>
<dbReference type="ExpressionAtlas" id="Q9LTC4">
    <property type="expression patterns" value="baseline and differential"/>
</dbReference>
<dbReference type="GO" id="GO:0005634">
    <property type="term" value="C:nucleus"/>
    <property type="evidence" value="ECO:0007669"/>
    <property type="project" value="UniProtKB-SubCell"/>
</dbReference>
<dbReference type="GO" id="GO:0003677">
    <property type="term" value="F:DNA binding"/>
    <property type="evidence" value="ECO:0007669"/>
    <property type="project" value="UniProtKB-KW"/>
</dbReference>
<dbReference type="GO" id="GO:0003700">
    <property type="term" value="F:DNA-binding transcription factor activity"/>
    <property type="evidence" value="ECO:0000250"/>
    <property type="project" value="TAIR"/>
</dbReference>
<dbReference type="GO" id="GO:0009409">
    <property type="term" value="P:response to cold"/>
    <property type="evidence" value="ECO:0000314"/>
    <property type="project" value="UniProtKB"/>
</dbReference>
<dbReference type="GO" id="GO:0009651">
    <property type="term" value="P:response to salt stress"/>
    <property type="evidence" value="ECO:0000315"/>
    <property type="project" value="UniProtKB"/>
</dbReference>
<dbReference type="GO" id="GO:0009414">
    <property type="term" value="P:response to water deprivation"/>
    <property type="evidence" value="ECO:0000315"/>
    <property type="project" value="UniProtKB"/>
</dbReference>
<dbReference type="CDD" id="cd00167">
    <property type="entry name" value="SANT"/>
    <property type="match status" value="2"/>
</dbReference>
<dbReference type="FunFam" id="1.10.10.60:FF:000001">
    <property type="entry name" value="MYB-related transcription factor"/>
    <property type="match status" value="1"/>
</dbReference>
<dbReference type="FunFam" id="1.10.10.60:FF:000316">
    <property type="entry name" value="Transcription factor MYB15"/>
    <property type="match status" value="1"/>
</dbReference>
<dbReference type="Gene3D" id="1.10.10.60">
    <property type="entry name" value="Homeodomain-like"/>
    <property type="match status" value="2"/>
</dbReference>
<dbReference type="InterPro" id="IPR009057">
    <property type="entry name" value="Homeodomain-like_sf"/>
</dbReference>
<dbReference type="InterPro" id="IPR017930">
    <property type="entry name" value="Myb_dom"/>
</dbReference>
<dbReference type="InterPro" id="IPR015495">
    <property type="entry name" value="Myb_TF_plants"/>
</dbReference>
<dbReference type="InterPro" id="IPR001005">
    <property type="entry name" value="SANT/Myb"/>
</dbReference>
<dbReference type="PANTHER" id="PTHR10641">
    <property type="entry name" value="MYB FAMILY TRANSCRIPTION FACTOR"/>
    <property type="match status" value="1"/>
</dbReference>
<dbReference type="PANTHER" id="PTHR10641:SF1406">
    <property type="entry name" value="TRANSCRIPTION FACTOR MYB15"/>
    <property type="match status" value="1"/>
</dbReference>
<dbReference type="Pfam" id="PF00249">
    <property type="entry name" value="Myb_DNA-binding"/>
    <property type="match status" value="2"/>
</dbReference>
<dbReference type="SMART" id="SM00717">
    <property type="entry name" value="SANT"/>
    <property type="match status" value="2"/>
</dbReference>
<dbReference type="SUPFAM" id="SSF46689">
    <property type="entry name" value="Homeodomain-like"/>
    <property type="match status" value="1"/>
</dbReference>
<dbReference type="PROSITE" id="PS51294">
    <property type="entry name" value="HTH_MYB"/>
    <property type="match status" value="2"/>
</dbReference>
<organism>
    <name type="scientific">Arabidopsis thaliana</name>
    <name type="common">Mouse-ear cress</name>
    <dbReference type="NCBI Taxonomy" id="3702"/>
    <lineage>
        <taxon>Eukaryota</taxon>
        <taxon>Viridiplantae</taxon>
        <taxon>Streptophyta</taxon>
        <taxon>Embryophyta</taxon>
        <taxon>Tracheophyta</taxon>
        <taxon>Spermatophyta</taxon>
        <taxon>Magnoliopsida</taxon>
        <taxon>eudicotyledons</taxon>
        <taxon>Gunneridae</taxon>
        <taxon>Pentapetalae</taxon>
        <taxon>rosids</taxon>
        <taxon>malvids</taxon>
        <taxon>Brassicales</taxon>
        <taxon>Brassicaceae</taxon>
        <taxon>Camelineae</taxon>
        <taxon>Arabidopsis</taxon>
    </lineage>
</organism>
<gene>
    <name evidence="8" type="primary">MYB15</name>
    <name evidence="7" type="ordered locus">At3g23250</name>
</gene>
<name>MYB15_ARATH</name>
<accession>Q9LTC4</accession>
<accession>O49744</accession>
<accession>Q39260</accession>
<feature type="chain" id="PRO_0000439652" description="Transcription factor MYB15">
    <location>
        <begin position="1"/>
        <end position="285"/>
    </location>
</feature>
<feature type="domain" description="HTH myb-type 1" evidence="1">
    <location>
        <begin position="9"/>
        <end position="61"/>
    </location>
</feature>
<feature type="domain" description="HTH myb-type 2" evidence="1">
    <location>
        <begin position="62"/>
        <end position="116"/>
    </location>
</feature>
<feature type="DNA-binding region" description="H-T-H motif" evidence="1">
    <location>
        <begin position="37"/>
        <end position="61"/>
    </location>
</feature>
<feature type="DNA-binding region" description="H-T-H motif" evidence="1">
    <location>
        <begin position="89"/>
        <end position="112"/>
    </location>
</feature>
<feature type="region of interest" description="Disordered" evidence="2">
    <location>
        <begin position="115"/>
        <end position="172"/>
    </location>
</feature>
<feature type="compositionally biased region" description="Polar residues" evidence="2">
    <location>
        <begin position="139"/>
        <end position="158"/>
    </location>
</feature>
<feature type="compositionally biased region" description="Low complexity" evidence="2">
    <location>
        <begin position="159"/>
        <end position="172"/>
    </location>
</feature>
<sequence length="285" mass="32042">MGRAPCCEKMGLKRGPWTPEEDQILVSFILNHGHSNWRALPKQAGLLRCGKSCRLRWMNYLKPDIKRGNFTKEEEDAIISLHQILGNRWSAIAAKLPGRTDNEIKNVWHTHLKKRLEDYQPAKPKTSNKKKGTKPKSESVITSSNSTRSESELADSSNPSGESLFSTSPSTSEVSSMTLISHDGYSNEINMDNKPGDISTIDQECVSFETFGADIDESFWKETLYSQDEHNYVSNDLEVAGLVEIQQEFQNLGSANNEMIFDSEMDFWFDVLARTGGEQDLLAGL</sequence>